<keyword id="KW-0067">ATP-binding</keyword>
<keyword id="KW-0227">DNA damage</keyword>
<keyword id="KW-0234">DNA repair</keyword>
<keyword id="KW-0238">DNA-binding</keyword>
<keyword id="KW-0547">Nucleotide-binding</keyword>
<keyword id="KW-1185">Reference proteome</keyword>
<comment type="function">
    <text evidence="1">This protein is involved in the repair of mismatches in DNA. It is possible that it carries out the mismatch recognition step. This protein has a weak ATPase activity.</text>
</comment>
<comment type="similarity">
    <text evidence="1">Belongs to the DNA mismatch repair MutS family.</text>
</comment>
<feature type="chain" id="PRO_1000008095" description="DNA mismatch repair protein MutS">
    <location>
        <begin position="1"/>
        <end position="855"/>
    </location>
</feature>
<feature type="binding site" evidence="1">
    <location>
        <begin position="618"/>
        <end position="625"/>
    </location>
    <ligand>
        <name>ATP</name>
        <dbReference type="ChEBI" id="CHEBI:30616"/>
    </ligand>
</feature>
<accession>A3QC86</accession>
<evidence type="ECO:0000255" key="1">
    <source>
        <dbReference type="HAMAP-Rule" id="MF_00096"/>
    </source>
</evidence>
<protein>
    <recommendedName>
        <fullName evidence="1">DNA mismatch repair protein MutS</fullName>
    </recommendedName>
</protein>
<proteinExistence type="inferred from homology"/>
<gene>
    <name evidence="1" type="primary">mutS</name>
    <name type="ordered locus">Shew_1214</name>
</gene>
<name>MUTS_SHELP</name>
<sequence>MNAVDTQYLEKHTPMMRQYLTLKAETPDMLLFYRMGDFYELFYDDAKRASELLGISLTARGKSGGDPIPMAGIPYHAVEGYLAKLVQLRVSVAICEQIGDPATTKGPVERKIVRIVTPGTLTDEALLQERQDNLLAAVYHGKVGFGYATLDVSSGRFVVTELASKEALEAELQRTNPAELLYSEDFSEPALIASLSGKRRRPEWEFDYDTSYKLLLEQFGTKDLYGFGLGEVRLSLQAAGCLIQYVKDTQRTALPHINAITRFNQCDSIVLDAATRKNLELTRNLQGGSDNTLASVLDNTATPMGSRMLQRWIHEPLRNHNIIRARHDAIDELLDNGYHESLHEQLKALGDIERITARLAIRSARPRDFARLRQALALLPEIQQQLADCNSPHLKALSSHLGDFPEEHALLSRAIVDNPPMLIRDGGVIKEGYHNELDEWRKLSQGATDYLAELEAREKAATGASTLKVGYNRVHGYYIEVSRRESDLVPMSYQRRQTLKNTERYIVAELKEHEEKVLSSQGKALALEKQLWEELFDLLMPRLHELQAFARAAAELDVITNFAERAEQLDYHRPELTAQSGIHIEAGRHPVVERVSQTPFIANPVSLNPARRMLIVTGPNMGGKSTYMRQVALITLMAHIGSFVPAQKAAIGPVDRIFTRIGAADDLASGRSTFMVEMTETANILHNATPESLVLMDEIGRGTSTYDGLSLAWSAAEHLAQNLKSMTLFATHYFELTQLPDQMENVANVHLDAIEHDDTIAFMHAVQEGAASKSYGLQVAALAGVPAKVVQAAKHKLHHLESRDREEELPELRQAQLSMTMPETSKALDRLDTIDPDSLTPRQALDLLYELKQLR</sequence>
<dbReference type="EMBL" id="CP000606">
    <property type="protein sequence ID" value="ABO23084.1"/>
    <property type="molecule type" value="Genomic_DNA"/>
</dbReference>
<dbReference type="RefSeq" id="WP_011865016.1">
    <property type="nucleotide sequence ID" value="NC_009092.1"/>
</dbReference>
<dbReference type="SMR" id="A3QC86"/>
<dbReference type="STRING" id="323850.Shew_1214"/>
<dbReference type="KEGG" id="slo:Shew_1214"/>
<dbReference type="eggNOG" id="COG0249">
    <property type="taxonomic scope" value="Bacteria"/>
</dbReference>
<dbReference type="HOGENOM" id="CLU_002472_4_0_6"/>
<dbReference type="OrthoDB" id="9802448at2"/>
<dbReference type="Proteomes" id="UP000001558">
    <property type="component" value="Chromosome"/>
</dbReference>
<dbReference type="GO" id="GO:0005829">
    <property type="term" value="C:cytosol"/>
    <property type="evidence" value="ECO:0007669"/>
    <property type="project" value="TreeGrafter"/>
</dbReference>
<dbReference type="GO" id="GO:0005524">
    <property type="term" value="F:ATP binding"/>
    <property type="evidence" value="ECO:0007669"/>
    <property type="project" value="UniProtKB-UniRule"/>
</dbReference>
<dbReference type="GO" id="GO:0140664">
    <property type="term" value="F:ATP-dependent DNA damage sensor activity"/>
    <property type="evidence" value="ECO:0007669"/>
    <property type="project" value="InterPro"/>
</dbReference>
<dbReference type="GO" id="GO:0003684">
    <property type="term" value="F:damaged DNA binding"/>
    <property type="evidence" value="ECO:0007669"/>
    <property type="project" value="UniProtKB-UniRule"/>
</dbReference>
<dbReference type="GO" id="GO:0030983">
    <property type="term" value="F:mismatched DNA binding"/>
    <property type="evidence" value="ECO:0007669"/>
    <property type="project" value="InterPro"/>
</dbReference>
<dbReference type="GO" id="GO:0006298">
    <property type="term" value="P:mismatch repair"/>
    <property type="evidence" value="ECO:0007669"/>
    <property type="project" value="UniProtKB-UniRule"/>
</dbReference>
<dbReference type="CDD" id="cd03284">
    <property type="entry name" value="ABC_MutS1"/>
    <property type="match status" value="1"/>
</dbReference>
<dbReference type="FunFam" id="1.10.1420.10:FF:000002">
    <property type="entry name" value="DNA mismatch repair protein MutS"/>
    <property type="match status" value="1"/>
</dbReference>
<dbReference type="FunFam" id="3.30.420.110:FF:000001">
    <property type="entry name" value="DNA mismatch repair protein MutS"/>
    <property type="match status" value="1"/>
</dbReference>
<dbReference type="FunFam" id="3.40.1170.10:FF:000001">
    <property type="entry name" value="DNA mismatch repair protein MutS"/>
    <property type="match status" value="1"/>
</dbReference>
<dbReference type="FunFam" id="3.40.50.300:FF:000283">
    <property type="entry name" value="DNA mismatch repair protein MutS"/>
    <property type="match status" value="1"/>
</dbReference>
<dbReference type="Gene3D" id="1.10.1420.10">
    <property type="match status" value="2"/>
</dbReference>
<dbReference type="Gene3D" id="6.10.140.430">
    <property type="match status" value="1"/>
</dbReference>
<dbReference type="Gene3D" id="3.40.1170.10">
    <property type="entry name" value="DNA repair protein MutS, domain I"/>
    <property type="match status" value="1"/>
</dbReference>
<dbReference type="Gene3D" id="3.30.420.110">
    <property type="entry name" value="MutS, connector domain"/>
    <property type="match status" value="1"/>
</dbReference>
<dbReference type="Gene3D" id="3.40.50.300">
    <property type="entry name" value="P-loop containing nucleotide triphosphate hydrolases"/>
    <property type="match status" value="1"/>
</dbReference>
<dbReference type="HAMAP" id="MF_00096">
    <property type="entry name" value="MutS"/>
    <property type="match status" value="1"/>
</dbReference>
<dbReference type="InterPro" id="IPR005748">
    <property type="entry name" value="DNA_mismatch_repair_MutS"/>
</dbReference>
<dbReference type="InterPro" id="IPR007695">
    <property type="entry name" value="DNA_mismatch_repair_MutS-lik_N"/>
</dbReference>
<dbReference type="InterPro" id="IPR017261">
    <property type="entry name" value="DNA_mismatch_repair_MutS/MSH"/>
</dbReference>
<dbReference type="InterPro" id="IPR000432">
    <property type="entry name" value="DNA_mismatch_repair_MutS_C"/>
</dbReference>
<dbReference type="InterPro" id="IPR007861">
    <property type="entry name" value="DNA_mismatch_repair_MutS_clamp"/>
</dbReference>
<dbReference type="InterPro" id="IPR007696">
    <property type="entry name" value="DNA_mismatch_repair_MutS_core"/>
</dbReference>
<dbReference type="InterPro" id="IPR016151">
    <property type="entry name" value="DNA_mismatch_repair_MutS_N"/>
</dbReference>
<dbReference type="InterPro" id="IPR036187">
    <property type="entry name" value="DNA_mismatch_repair_MutS_sf"/>
</dbReference>
<dbReference type="InterPro" id="IPR007860">
    <property type="entry name" value="DNA_mmatch_repair_MutS_con_dom"/>
</dbReference>
<dbReference type="InterPro" id="IPR045076">
    <property type="entry name" value="MutS"/>
</dbReference>
<dbReference type="InterPro" id="IPR036678">
    <property type="entry name" value="MutS_con_dom_sf"/>
</dbReference>
<dbReference type="InterPro" id="IPR027417">
    <property type="entry name" value="P-loop_NTPase"/>
</dbReference>
<dbReference type="NCBIfam" id="TIGR01070">
    <property type="entry name" value="mutS1"/>
    <property type="match status" value="1"/>
</dbReference>
<dbReference type="NCBIfam" id="NF003810">
    <property type="entry name" value="PRK05399.1"/>
    <property type="match status" value="1"/>
</dbReference>
<dbReference type="PANTHER" id="PTHR11361:SF34">
    <property type="entry name" value="DNA MISMATCH REPAIR PROTEIN MSH1, MITOCHONDRIAL"/>
    <property type="match status" value="1"/>
</dbReference>
<dbReference type="PANTHER" id="PTHR11361">
    <property type="entry name" value="DNA MISMATCH REPAIR PROTEIN MUTS FAMILY MEMBER"/>
    <property type="match status" value="1"/>
</dbReference>
<dbReference type="Pfam" id="PF01624">
    <property type="entry name" value="MutS_I"/>
    <property type="match status" value="1"/>
</dbReference>
<dbReference type="Pfam" id="PF05188">
    <property type="entry name" value="MutS_II"/>
    <property type="match status" value="1"/>
</dbReference>
<dbReference type="Pfam" id="PF05192">
    <property type="entry name" value="MutS_III"/>
    <property type="match status" value="1"/>
</dbReference>
<dbReference type="Pfam" id="PF05190">
    <property type="entry name" value="MutS_IV"/>
    <property type="match status" value="1"/>
</dbReference>
<dbReference type="Pfam" id="PF00488">
    <property type="entry name" value="MutS_V"/>
    <property type="match status" value="1"/>
</dbReference>
<dbReference type="PIRSF" id="PIRSF037677">
    <property type="entry name" value="DNA_mis_repair_Msh6"/>
    <property type="match status" value="1"/>
</dbReference>
<dbReference type="SMART" id="SM00534">
    <property type="entry name" value="MUTSac"/>
    <property type="match status" value="1"/>
</dbReference>
<dbReference type="SMART" id="SM00533">
    <property type="entry name" value="MUTSd"/>
    <property type="match status" value="1"/>
</dbReference>
<dbReference type="SUPFAM" id="SSF55271">
    <property type="entry name" value="DNA repair protein MutS, domain I"/>
    <property type="match status" value="1"/>
</dbReference>
<dbReference type="SUPFAM" id="SSF53150">
    <property type="entry name" value="DNA repair protein MutS, domain II"/>
    <property type="match status" value="1"/>
</dbReference>
<dbReference type="SUPFAM" id="SSF48334">
    <property type="entry name" value="DNA repair protein MutS, domain III"/>
    <property type="match status" value="1"/>
</dbReference>
<dbReference type="SUPFAM" id="SSF52540">
    <property type="entry name" value="P-loop containing nucleoside triphosphate hydrolases"/>
    <property type="match status" value="1"/>
</dbReference>
<dbReference type="PROSITE" id="PS00486">
    <property type="entry name" value="DNA_MISMATCH_REPAIR_2"/>
    <property type="match status" value="1"/>
</dbReference>
<organism>
    <name type="scientific">Shewanella loihica (strain ATCC BAA-1088 / PV-4)</name>
    <dbReference type="NCBI Taxonomy" id="323850"/>
    <lineage>
        <taxon>Bacteria</taxon>
        <taxon>Pseudomonadati</taxon>
        <taxon>Pseudomonadota</taxon>
        <taxon>Gammaproteobacteria</taxon>
        <taxon>Alteromonadales</taxon>
        <taxon>Shewanellaceae</taxon>
        <taxon>Shewanella</taxon>
    </lineage>
</organism>
<reference key="1">
    <citation type="submission" date="2007-03" db="EMBL/GenBank/DDBJ databases">
        <title>Complete sequence of Shewanella loihica PV-4.</title>
        <authorList>
            <consortium name="US DOE Joint Genome Institute"/>
            <person name="Copeland A."/>
            <person name="Lucas S."/>
            <person name="Lapidus A."/>
            <person name="Barry K."/>
            <person name="Detter J.C."/>
            <person name="Glavina del Rio T."/>
            <person name="Hammon N."/>
            <person name="Israni S."/>
            <person name="Dalin E."/>
            <person name="Tice H."/>
            <person name="Pitluck S."/>
            <person name="Chain P."/>
            <person name="Malfatti S."/>
            <person name="Shin M."/>
            <person name="Vergez L."/>
            <person name="Schmutz J."/>
            <person name="Larimer F."/>
            <person name="Land M."/>
            <person name="Hauser L."/>
            <person name="Kyrpides N."/>
            <person name="Mikhailova N."/>
            <person name="Romine M.F."/>
            <person name="Serres G."/>
            <person name="Fredrickson J."/>
            <person name="Tiedje J."/>
            <person name="Richardson P."/>
        </authorList>
    </citation>
    <scope>NUCLEOTIDE SEQUENCE [LARGE SCALE GENOMIC DNA]</scope>
    <source>
        <strain>ATCC BAA-1088 / PV-4</strain>
    </source>
</reference>